<name>H31_PICGU</name>
<sequence length="136" mass="15388">MARTKQTARKSTGGKAPRKQLASKAARKSAPSTGGVKKPHRYKPGTVALREIRRFQKSTELLIRKLPFQRLVREIAQDFKTDLRFQSSAIGALQESVEAYLVSLFEDTNLCAIHAKRVTIQKKDIQLARRLRGERS</sequence>
<dbReference type="EMBL" id="CH408156">
    <property type="protein sequence ID" value="EDK37878.1"/>
    <property type="molecule type" value="Genomic_DNA"/>
</dbReference>
<dbReference type="EMBL" id="CH408160">
    <property type="protein sequence ID" value="EDK40712.1"/>
    <property type="molecule type" value="Genomic_DNA"/>
</dbReference>
<dbReference type="RefSeq" id="XP_001482855.1">
    <property type="nucleotide sequence ID" value="XM_001482805.1"/>
</dbReference>
<dbReference type="RefSeq" id="XP_001486305.1">
    <property type="nucleotide sequence ID" value="XM_001486255.1"/>
</dbReference>
<dbReference type="SMR" id="A5DFC5"/>
<dbReference type="FunCoup" id="A5DFC5">
    <property type="interactions" value="912"/>
</dbReference>
<dbReference type="STRING" id="294746.A5DFC5"/>
<dbReference type="GeneID" id="5124555"/>
<dbReference type="GeneID" id="5128133"/>
<dbReference type="KEGG" id="pgu:PGUG_01976"/>
<dbReference type="KEGG" id="pgu:PGUG_04810"/>
<dbReference type="VEuPathDB" id="FungiDB:PGUG_01976"/>
<dbReference type="VEuPathDB" id="FungiDB:PGUG_04810"/>
<dbReference type="eggNOG" id="KOG1745">
    <property type="taxonomic scope" value="Eukaryota"/>
</dbReference>
<dbReference type="HOGENOM" id="CLU_078295_4_0_1"/>
<dbReference type="InParanoid" id="A5DFC5"/>
<dbReference type="OMA" id="HIFAEMA"/>
<dbReference type="OrthoDB" id="5326060at2759"/>
<dbReference type="Proteomes" id="UP000001997">
    <property type="component" value="Unassembled WGS sequence"/>
</dbReference>
<dbReference type="GO" id="GO:0000786">
    <property type="term" value="C:nucleosome"/>
    <property type="evidence" value="ECO:0007669"/>
    <property type="project" value="UniProtKB-KW"/>
</dbReference>
<dbReference type="GO" id="GO:0005634">
    <property type="term" value="C:nucleus"/>
    <property type="evidence" value="ECO:0007669"/>
    <property type="project" value="UniProtKB-SubCell"/>
</dbReference>
<dbReference type="GO" id="GO:0003677">
    <property type="term" value="F:DNA binding"/>
    <property type="evidence" value="ECO:0007669"/>
    <property type="project" value="UniProtKB-KW"/>
</dbReference>
<dbReference type="GO" id="GO:0046982">
    <property type="term" value="F:protein heterodimerization activity"/>
    <property type="evidence" value="ECO:0007669"/>
    <property type="project" value="InterPro"/>
</dbReference>
<dbReference type="GO" id="GO:0030527">
    <property type="term" value="F:structural constituent of chromatin"/>
    <property type="evidence" value="ECO:0007669"/>
    <property type="project" value="InterPro"/>
</dbReference>
<dbReference type="CDD" id="cd22911">
    <property type="entry name" value="HFD_H3"/>
    <property type="match status" value="1"/>
</dbReference>
<dbReference type="FunFam" id="1.10.20.10:FF:000010">
    <property type="entry name" value="Histone H3"/>
    <property type="match status" value="1"/>
</dbReference>
<dbReference type="Gene3D" id="1.10.20.10">
    <property type="entry name" value="Histone, subunit A"/>
    <property type="match status" value="1"/>
</dbReference>
<dbReference type="InterPro" id="IPR009072">
    <property type="entry name" value="Histone-fold"/>
</dbReference>
<dbReference type="InterPro" id="IPR007125">
    <property type="entry name" value="Histone_H2A/H2B/H3"/>
</dbReference>
<dbReference type="InterPro" id="IPR000164">
    <property type="entry name" value="Histone_H3/CENP-A"/>
</dbReference>
<dbReference type="PANTHER" id="PTHR11426">
    <property type="entry name" value="HISTONE H3"/>
    <property type="match status" value="1"/>
</dbReference>
<dbReference type="Pfam" id="PF00125">
    <property type="entry name" value="Histone"/>
    <property type="match status" value="1"/>
</dbReference>
<dbReference type="PRINTS" id="PR00622">
    <property type="entry name" value="HISTONEH3"/>
</dbReference>
<dbReference type="SMART" id="SM00428">
    <property type="entry name" value="H3"/>
    <property type="match status" value="1"/>
</dbReference>
<dbReference type="SUPFAM" id="SSF47113">
    <property type="entry name" value="Histone-fold"/>
    <property type="match status" value="1"/>
</dbReference>
<dbReference type="PROSITE" id="PS00322">
    <property type="entry name" value="HISTONE_H3_1"/>
    <property type="match status" value="1"/>
</dbReference>
<dbReference type="PROSITE" id="PS00959">
    <property type="entry name" value="HISTONE_H3_2"/>
    <property type="match status" value="1"/>
</dbReference>
<reference key="1">
    <citation type="journal article" date="2009" name="Nature">
        <title>Evolution of pathogenicity and sexual reproduction in eight Candida genomes.</title>
        <authorList>
            <person name="Butler G."/>
            <person name="Rasmussen M.D."/>
            <person name="Lin M.F."/>
            <person name="Santos M.A.S."/>
            <person name="Sakthikumar S."/>
            <person name="Munro C.A."/>
            <person name="Rheinbay E."/>
            <person name="Grabherr M."/>
            <person name="Forche A."/>
            <person name="Reedy J.L."/>
            <person name="Agrafioti I."/>
            <person name="Arnaud M.B."/>
            <person name="Bates S."/>
            <person name="Brown A.J.P."/>
            <person name="Brunke S."/>
            <person name="Costanzo M.C."/>
            <person name="Fitzpatrick D.A."/>
            <person name="de Groot P.W.J."/>
            <person name="Harris D."/>
            <person name="Hoyer L.L."/>
            <person name="Hube B."/>
            <person name="Klis F.M."/>
            <person name="Kodira C."/>
            <person name="Lennard N."/>
            <person name="Logue M.E."/>
            <person name="Martin R."/>
            <person name="Neiman A.M."/>
            <person name="Nikolaou E."/>
            <person name="Quail M.A."/>
            <person name="Quinn J."/>
            <person name="Santos M.C."/>
            <person name="Schmitzberger F.F."/>
            <person name="Sherlock G."/>
            <person name="Shah P."/>
            <person name="Silverstein K.A.T."/>
            <person name="Skrzypek M.S."/>
            <person name="Soll D."/>
            <person name="Staggs R."/>
            <person name="Stansfield I."/>
            <person name="Stumpf M.P.H."/>
            <person name="Sudbery P.E."/>
            <person name="Srikantha T."/>
            <person name="Zeng Q."/>
            <person name="Berman J."/>
            <person name="Berriman M."/>
            <person name="Heitman J."/>
            <person name="Gow N.A.R."/>
            <person name="Lorenz M.C."/>
            <person name="Birren B.W."/>
            <person name="Kellis M."/>
            <person name="Cuomo C.A."/>
        </authorList>
    </citation>
    <scope>NUCLEOTIDE SEQUENCE [LARGE SCALE GENOMIC DNA]</scope>
    <source>
        <strain>ATCC 6260 / CBS 566 / DSM 6381 / JCM 1539 / NBRC 10279 / NRRL Y-324</strain>
    </source>
</reference>
<proteinExistence type="inferred from homology"/>
<keyword id="KW-0007">Acetylation</keyword>
<keyword id="KW-0158">Chromosome</keyword>
<keyword id="KW-0238">DNA-binding</keyword>
<keyword id="KW-0488">Methylation</keyword>
<keyword id="KW-0544">Nucleosome core</keyword>
<keyword id="KW-0539">Nucleus</keyword>
<keyword id="KW-0597">Phosphoprotein</keyword>
<keyword id="KW-1185">Reference proteome</keyword>
<accession>A5DFC5</accession>
<comment type="function">
    <text>Core component of nucleosome. Nucleosomes wrap and compact DNA into chromatin, limiting DNA accessibility to the cellular machineries which require DNA as a template. Histones thereby play a central role in transcription regulation, DNA repair, DNA replication and chromosomal stability. DNA accessibility is regulated via a complex set of post-translational modifications of histones, also called histone code, and nucleosome remodeling.</text>
</comment>
<comment type="subunit">
    <text>The nucleosome is a histone octamer containing two molecules each of H2A, H2B, H3 and H4 assembled in one H3-H4 heterotetramer and two H2A-H2B heterodimers. The octamer wraps approximately 147 bp of DNA.</text>
</comment>
<comment type="subcellular location">
    <subcellularLocation>
        <location evidence="1">Nucleus</location>
    </subcellularLocation>
    <subcellularLocation>
        <location evidence="1">Chromosome</location>
    </subcellularLocation>
</comment>
<comment type="PTM">
    <text evidence="1">Phosphorylated to form H3S10ph. H3S10ph promotes subsequent H3K14ac formation and is required for transcriptional activation through TBP recruitment to the promoters (By similarity).</text>
</comment>
<comment type="PTM">
    <text evidence="1">Mono-, di- and trimethylated by the COMPASS complex to form H3K4me1/2/3. H3K4me activates gene expression by regulating transcription elongation and plays a role in telomere length maintenance. H3K4me enrichment correlates with transcription levels, and occurs in a 5' to 3' gradient with H3K4me3 enrichment at the 5'-end of genes, shifting to H3K4me2 and then H3K4me1. Methylated by SET2 to form H3K36me. H3K36me represses gene expression. Methylated by DOT1 to form H3K79me. H3K79me is required for association of SIR proteins with telomeric regions and for telomeric silencing. The COMPASS-mediated formation of H3K4me2/3 and the DOT1-mediated formation of H3K79me require H2BK123ub1 (By similarity).</text>
</comment>
<comment type="PTM">
    <text evidence="1">Acetylation of histone H3 leads to transcriptional activation. H3K14ac formation by GCN5 is promoted by H3S10ph. H3K14ac can also be formed by ESA1. H3K56ac formation occurs predominantly in newly synthesized H3 molecules during G1, S and G2/M of the cell cycle and may be involved in DNA repair (By similarity).</text>
</comment>
<comment type="similarity">
    <text evidence="3">Belongs to the histone H3 family.</text>
</comment>
<comment type="caution">
    <text evidence="3">To ensure consistency between histone entries, we follow the 'Brno' nomenclature for histone modifications, with positions referring to those used in the literature for the 'closest' model organism. Due to slight variations in histone sequences between organisms and to the presence of initiator methionine in UniProtKB/Swiss-Prot sequences, the actual positions of modified amino acids in the sequence generally differ. In this entry the following conventions are used: H3K4me1/2/3 = mono-, di- and trimethylated Lys-5; H3K9ac = acetylated Lys-10; H3K9me1 = monomethylated Lys-10; H3S10ph = phosphorylated Ser-11; H3K14ac = acetylated Lys-15; H3K14me2 = dimethylated Lys-15; H3K18ac = acetylated Lys-19; H3K18me1 = monomethylated Lys-19; H3K23ac = acetylated Lys-24; H3K23me1 = monomethylated Lys-24; H3K27ac = acetylated Lys-28; H3K27me1/2/3 = mono-, di- and trimethylated Lys-28; H3K36ac = acetylated Lys-37; H3K36me1/2/3 = mono-, di- and trimethylated Lys-37; H3K56ac = acetylated Lys-57; H3K64ac = acetylated Lys-65; H3K79me1/2/3 = mono-, di- and trimethylated Lys-80.</text>
</comment>
<gene>
    <name type="primary">HHT1</name>
    <name type="ORF">PGUG_01976</name>
</gene>
<gene>
    <name type="primary">HHT2</name>
    <name type="ORF">PGUG_04810</name>
</gene>
<feature type="initiator methionine" description="Removed" evidence="1">
    <location>
        <position position="1"/>
    </location>
</feature>
<feature type="chain" id="PRO_0000297751" description="Histone H3.1/H3.2">
    <location>
        <begin position="2"/>
        <end position="136"/>
    </location>
</feature>
<feature type="region of interest" description="Disordered" evidence="2">
    <location>
        <begin position="1"/>
        <end position="43"/>
    </location>
</feature>
<feature type="modified residue" description="N6,N6,N6-trimethyllysine; alternate" evidence="1">
    <location>
        <position position="5"/>
    </location>
</feature>
<feature type="modified residue" description="N6,N6-dimethyllysine; alternate" evidence="1">
    <location>
        <position position="5"/>
    </location>
</feature>
<feature type="modified residue" description="N6-methyllysine; alternate" evidence="1">
    <location>
        <position position="5"/>
    </location>
</feature>
<feature type="modified residue" description="N6-acetyllysine; alternate" evidence="1">
    <location>
        <position position="10"/>
    </location>
</feature>
<feature type="modified residue" description="N6-methyllysine; alternate" evidence="1">
    <location>
        <position position="10"/>
    </location>
</feature>
<feature type="modified residue" description="Phosphoserine" evidence="1">
    <location>
        <position position="11"/>
    </location>
</feature>
<feature type="modified residue" description="N6,N6-dimethyllysine; alternate" evidence="1">
    <location>
        <position position="15"/>
    </location>
</feature>
<feature type="modified residue" description="N6-acetyllysine; alternate" evidence="1">
    <location>
        <position position="15"/>
    </location>
</feature>
<feature type="modified residue" description="N6-acetyllysine; alternate" evidence="1">
    <location>
        <position position="19"/>
    </location>
</feature>
<feature type="modified residue" description="N6-methyllysine; alternate" evidence="1">
    <location>
        <position position="19"/>
    </location>
</feature>
<feature type="modified residue" description="N6-acetyllysine; alternate" evidence="1">
    <location>
        <position position="24"/>
    </location>
</feature>
<feature type="modified residue" description="N6-methyllysine; alternate" evidence="1">
    <location>
        <position position="24"/>
    </location>
</feature>
<feature type="modified residue" description="N6,N6,N6-trimethyllysine; alternate" evidence="1">
    <location>
        <position position="28"/>
    </location>
</feature>
<feature type="modified residue" description="N6,N6-dimethyllysine; alternate" evidence="1">
    <location>
        <position position="28"/>
    </location>
</feature>
<feature type="modified residue" description="N6-acetyllysine; alternate" evidence="1">
    <location>
        <position position="28"/>
    </location>
</feature>
<feature type="modified residue" description="N6-methyllysine; alternate" evidence="1">
    <location>
        <position position="28"/>
    </location>
</feature>
<feature type="modified residue" description="N6,N6,N6-trimethyllysine; alternate" evidence="1">
    <location>
        <position position="37"/>
    </location>
</feature>
<feature type="modified residue" description="N6,N6-dimethyllysine; alternate" evidence="1">
    <location>
        <position position="37"/>
    </location>
</feature>
<feature type="modified residue" description="N6-acetyllysine; alternate" evidence="1">
    <location>
        <position position="37"/>
    </location>
</feature>
<feature type="modified residue" description="N6-methyllysine; alternate" evidence="1">
    <location>
        <position position="37"/>
    </location>
</feature>
<feature type="modified residue" description="N6-acetyllysine" evidence="1">
    <location>
        <position position="57"/>
    </location>
</feature>
<feature type="modified residue" description="N6-acetyllysine" evidence="1">
    <location>
        <position position="65"/>
    </location>
</feature>
<feature type="modified residue" description="N6,N6,N6-trimethyllysine; alternate" evidence="1">
    <location>
        <position position="80"/>
    </location>
</feature>
<feature type="modified residue" description="N6,N6-dimethyllysine; alternate" evidence="1">
    <location>
        <position position="80"/>
    </location>
</feature>
<feature type="modified residue" description="N6-methyllysine; alternate" evidence="1">
    <location>
        <position position="80"/>
    </location>
</feature>
<organism>
    <name type="scientific">Meyerozyma guilliermondii (strain ATCC 6260 / CBS 566 / DSM 6381 / JCM 1539 / NBRC 10279 / NRRL Y-324)</name>
    <name type="common">Yeast</name>
    <name type="synonym">Candida guilliermondii</name>
    <dbReference type="NCBI Taxonomy" id="294746"/>
    <lineage>
        <taxon>Eukaryota</taxon>
        <taxon>Fungi</taxon>
        <taxon>Dikarya</taxon>
        <taxon>Ascomycota</taxon>
        <taxon>Saccharomycotina</taxon>
        <taxon>Pichiomycetes</taxon>
        <taxon>Debaryomycetaceae</taxon>
        <taxon>Meyerozyma</taxon>
    </lineage>
</organism>
<evidence type="ECO:0000250" key="1"/>
<evidence type="ECO:0000256" key="2">
    <source>
        <dbReference type="SAM" id="MobiDB-lite"/>
    </source>
</evidence>
<evidence type="ECO:0000305" key="3"/>
<protein>
    <recommendedName>
        <fullName>Histone H3.1/H3.2</fullName>
    </recommendedName>
</protein>